<dbReference type="EMBL" id="AE000520">
    <property type="protein sequence ID" value="AAC65580.1"/>
    <property type="molecule type" value="Genomic_DNA"/>
</dbReference>
<dbReference type="PIR" id="G71303">
    <property type="entry name" value="G71303"/>
</dbReference>
<dbReference type="RefSeq" id="WP_010882043.1">
    <property type="nucleotide sequence ID" value="NC_000919.1"/>
</dbReference>
<dbReference type="SMR" id="O83606"/>
<dbReference type="IntAct" id="O83606">
    <property type="interactions" value="11"/>
</dbReference>
<dbReference type="STRING" id="243276.TP_0597"/>
<dbReference type="EnsemblBacteria" id="AAC65580">
    <property type="protein sequence ID" value="AAC65580"/>
    <property type="gene ID" value="TP_0597"/>
</dbReference>
<dbReference type="KEGG" id="tpa:TP_0597"/>
<dbReference type="HOGENOM" id="CLU_2412295_0_0_12"/>
<dbReference type="Proteomes" id="UP000000811">
    <property type="component" value="Chromosome"/>
</dbReference>
<accession>O83606</accession>
<protein>
    <recommendedName>
        <fullName>Uncharacterized protein TP_0597</fullName>
    </recommendedName>
</protein>
<proteinExistence type="predicted"/>
<feature type="chain" id="PRO_0000202283" description="Uncharacterized protein TP_0597">
    <location>
        <begin position="1"/>
        <end position="92"/>
    </location>
</feature>
<organism>
    <name type="scientific">Treponema pallidum (strain Nichols)</name>
    <dbReference type="NCBI Taxonomy" id="243276"/>
    <lineage>
        <taxon>Bacteria</taxon>
        <taxon>Pseudomonadati</taxon>
        <taxon>Spirochaetota</taxon>
        <taxon>Spirochaetia</taxon>
        <taxon>Spirochaetales</taxon>
        <taxon>Treponemataceae</taxon>
        <taxon>Treponema</taxon>
    </lineage>
</organism>
<name>Y597_TREPA</name>
<reference key="1">
    <citation type="journal article" date="1998" name="Science">
        <title>Complete genome sequence of Treponema pallidum, the syphilis spirochete.</title>
        <authorList>
            <person name="Fraser C.M."/>
            <person name="Norris S.J."/>
            <person name="Weinstock G.M."/>
            <person name="White O."/>
            <person name="Sutton G.G."/>
            <person name="Dodson R.J."/>
            <person name="Gwinn M.L."/>
            <person name="Hickey E.K."/>
            <person name="Clayton R.A."/>
            <person name="Ketchum K.A."/>
            <person name="Sodergren E."/>
            <person name="Hardham J.M."/>
            <person name="McLeod M.P."/>
            <person name="Salzberg S.L."/>
            <person name="Peterson J.D."/>
            <person name="Khalak H.G."/>
            <person name="Richardson D.L."/>
            <person name="Howell J.K."/>
            <person name="Chidambaram M."/>
            <person name="Utterback T.R."/>
            <person name="McDonald L.A."/>
            <person name="Artiach P."/>
            <person name="Bowman C."/>
            <person name="Cotton M.D."/>
            <person name="Fujii C."/>
            <person name="Garland S.A."/>
            <person name="Hatch B."/>
            <person name="Horst K."/>
            <person name="Roberts K.M."/>
            <person name="Sandusky M."/>
            <person name="Weidman J.F."/>
            <person name="Smith H.O."/>
            <person name="Venter J.C."/>
        </authorList>
    </citation>
    <scope>NUCLEOTIDE SEQUENCE [LARGE SCALE GENOMIC DNA]</scope>
    <source>
        <strain>Nichols</strain>
    </source>
</reference>
<keyword id="KW-1185">Reference proteome</keyword>
<sequence length="92" mass="10313">MRRILSYKDEDIDAHMVMRRSLLVTNLGKGALVGHRVQQSQVYRMSRAYALPKVAAITSNGVVSVNYDGSVSWYEGDGATLKATEFIRTEDF</sequence>
<gene>
    <name type="ordered locus">TP_0597</name>
</gene>